<feature type="chain" id="PRO_1000136588" description="UPF0259 membrane protein YciC">
    <location>
        <begin position="1"/>
        <end position="247"/>
    </location>
</feature>
<feature type="transmembrane region" description="Helical" evidence="1">
    <location>
        <begin position="20"/>
        <end position="40"/>
    </location>
</feature>
<feature type="transmembrane region" description="Helical" evidence="1">
    <location>
        <begin position="87"/>
        <end position="107"/>
    </location>
</feature>
<feature type="transmembrane region" description="Helical" evidence="1">
    <location>
        <begin position="118"/>
        <end position="140"/>
    </location>
</feature>
<feature type="transmembrane region" description="Helical" evidence="1">
    <location>
        <begin position="152"/>
        <end position="172"/>
    </location>
</feature>
<feature type="transmembrane region" description="Helical" evidence="1">
    <location>
        <begin position="194"/>
        <end position="214"/>
    </location>
</feature>
<feature type="transmembrane region" description="Helical" evidence="1">
    <location>
        <begin position="219"/>
        <end position="239"/>
    </location>
</feature>
<keyword id="KW-0997">Cell inner membrane</keyword>
<keyword id="KW-1003">Cell membrane</keyword>
<keyword id="KW-0472">Membrane</keyword>
<keyword id="KW-0812">Transmembrane</keyword>
<keyword id="KW-1133">Transmembrane helix</keyword>
<gene>
    <name evidence="1" type="primary">yciC</name>
    <name type="ordered locus">SeAg_B1412</name>
</gene>
<comment type="subcellular location">
    <subcellularLocation>
        <location evidence="1">Cell inner membrane</location>
        <topology evidence="1">Multi-pass membrane protein</topology>
    </subcellularLocation>
</comment>
<comment type="similarity">
    <text evidence="1">Belongs to the UPF0259 family.</text>
</comment>
<protein>
    <recommendedName>
        <fullName evidence="1">UPF0259 membrane protein YciC</fullName>
    </recommendedName>
</protein>
<sequence>MSITAKSVYRDAGNFFRNQFITILLVSLLCAFITVVLGHAFSPSDAQIAQLSEGEHLAGSAGLFELVQNMTPEQQQILLRASAASTFSGLIGNAILAGGIILMIQLVSAGHRVSALRAIGASAPALPKLFILIFLTTLLVQIGIMLIVVPGIIMAIVLALAPVMLVEEKMGVFAAMRSSMRLAWANMRLVAPAVIGWLLAKTLLLLFAPSFAVLTPNVGAVLANTLSNLISAVLLIYLFRLYMLIRQ</sequence>
<organism>
    <name type="scientific">Salmonella agona (strain SL483)</name>
    <dbReference type="NCBI Taxonomy" id="454166"/>
    <lineage>
        <taxon>Bacteria</taxon>
        <taxon>Pseudomonadati</taxon>
        <taxon>Pseudomonadota</taxon>
        <taxon>Gammaproteobacteria</taxon>
        <taxon>Enterobacterales</taxon>
        <taxon>Enterobacteriaceae</taxon>
        <taxon>Salmonella</taxon>
    </lineage>
</organism>
<dbReference type="EMBL" id="CP001138">
    <property type="protein sequence ID" value="ACH52768.1"/>
    <property type="molecule type" value="Genomic_DNA"/>
</dbReference>
<dbReference type="RefSeq" id="WP_000028507.1">
    <property type="nucleotide sequence ID" value="NC_011149.1"/>
</dbReference>
<dbReference type="KEGG" id="sea:SeAg_B1412"/>
<dbReference type="HOGENOM" id="CLU_073287_0_0_6"/>
<dbReference type="Proteomes" id="UP000008819">
    <property type="component" value="Chromosome"/>
</dbReference>
<dbReference type="GO" id="GO:0005886">
    <property type="term" value="C:plasma membrane"/>
    <property type="evidence" value="ECO:0007669"/>
    <property type="project" value="UniProtKB-SubCell"/>
</dbReference>
<dbReference type="HAMAP" id="MF_01067">
    <property type="entry name" value="UPF0259"/>
    <property type="match status" value="1"/>
</dbReference>
<dbReference type="InterPro" id="IPR009627">
    <property type="entry name" value="UPF0259"/>
</dbReference>
<dbReference type="NCBIfam" id="NF002774">
    <property type="entry name" value="PRK02868.1"/>
    <property type="match status" value="1"/>
</dbReference>
<dbReference type="Pfam" id="PF06790">
    <property type="entry name" value="UPF0259"/>
    <property type="match status" value="1"/>
</dbReference>
<accession>B5F4L6</accession>
<proteinExistence type="inferred from homology"/>
<reference key="1">
    <citation type="journal article" date="2011" name="J. Bacteriol.">
        <title>Comparative genomics of 28 Salmonella enterica isolates: evidence for CRISPR-mediated adaptive sublineage evolution.</title>
        <authorList>
            <person name="Fricke W.F."/>
            <person name="Mammel M.K."/>
            <person name="McDermott P.F."/>
            <person name="Tartera C."/>
            <person name="White D.G."/>
            <person name="Leclerc J.E."/>
            <person name="Ravel J."/>
            <person name="Cebula T.A."/>
        </authorList>
    </citation>
    <scope>NUCLEOTIDE SEQUENCE [LARGE SCALE GENOMIC DNA]</scope>
    <source>
        <strain>SL483</strain>
    </source>
</reference>
<name>YCIC_SALA4</name>
<evidence type="ECO:0000255" key="1">
    <source>
        <dbReference type="HAMAP-Rule" id="MF_01067"/>
    </source>
</evidence>